<proteinExistence type="inferred from homology"/>
<comment type="function">
    <text evidence="1">One of the primary rRNA binding proteins. Required for association of the 30S and 50S subunits to form the 70S ribosome, for tRNA binding and peptide bond formation. It has been suggested to have peptidyltransferase activity; this is somewhat controversial. Makes several contacts with the 16S rRNA in the 70S ribosome.</text>
</comment>
<comment type="subunit">
    <text evidence="1">Part of the 50S ribosomal subunit. Forms a bridge to the 30S subunit in the 70S ribosome.</text>
</comment>
<comment type="similarity">
    <text evidence="1">Belongs to the universal ribosomal protein uL2 family.</text>
</comment>
<evidence type="ECO:0000255" key="1">
    <source>
        <dbReference type="HAMAP-Rule" id="MF_01320"/>
    </source>
</evidence>
<evidence type="ECO:0000256" key="2">
    <source>
        <dbReference type="SAM" id="MobiDB-lite"/>
    </source>
</evidence>
<evidence type="ECO:0000305" key="3"/>
<dbReference type="EMBL" id="CP001217">
    <property type="protein sequence ID" value="ACJ08432.1"/>
    <property type="molecule type" value="Genomic_DNA"/>
</dbReference>
<dbReference type="SMR" id="B6JNF4"/>
<dbReference type="KEGG" id="hpp:HPP12_1280"/>
<dbReference type="HOGENOM" id="CLU_036235_2_1_7"/>
<dbReference type="Proteomes" id="UP000008198">
    <property type="component" value="Chromosome"/>
</dbReference>
<dbReference type="GO" id="GO:0015934">
    <property type="term" value="C:large ribosomal subunit"/>
    <property type="evidence" value="ECO:0007669"/>
    <property type="project" value="InterPro"/>
</dbReference>
<dbReference type="GO" id="GO:0019843">
    <property type="term" value="F:rRNA binding"/>
    <property type="evidence" value="ECO:0007669"/>
    <property type="project" value="UniProtKB-UniRule"/>
</dbReference>
<dbReference type="GO" id="GO:0003735">
    <property type="term" value="F:structural constituent of ribosome"/>
    <property type="evidence" value="ECO:0007669"/>
    <property type="project" value="InterPro"/>
</dbReference>
<dbReference type="GO" id="GO:0016740">
    <property type="term" value="F:transferase activity"/>
    <property type="evidence" value="ECO:0007669"/>
    <property type="project" value="InterPro"/>
</dbReference>
<dbReference type="GO" id="GO:0002181">
    <property type="term" value="P:cytoplasmic translation"/>
    <property type="evidence" value="ECO:0007669"/>
    <property type="project" value="TreeGrafter"/>
</dbReference>
<dbReference type="FunFam" id="2.30.30.30:FF:000001">
    <property type="entry name" value="50S ribosomal protein L2"/>
    <property type="match status" value="1"/>
</dbReference>
<dbReference type="FunFam" id="2.40.50.140:FF:000003">
    <property type="entry name" value="50S ribosomal protein L2"/>
    <property type="match status" value="1"/>
</dbReference>
<dbReference type="FunFam" id="4.10.950.10:FF:000001">
    <property type="entry name" value="50S ribosomal protein L2"/>
    <property type="match status" value="1"/>
</dbReference>
<dbReference type="Gene3D" id="2.30.30.30">
    <property type="match status" value="1"/>
</dbReference>
<dbReference type="Gene3D" id="2.40.50.140">
    <property type="entry name" value="Nucleic acid-binding proteins"/>
    <property type="match status" value="1"/>
</dbReference>
<dbReference type="Gene3D" id="4.10.950.10">
    <property type="entry name" value="Ribosomal protein L2, domain 3"/>
    <property type="match status" value="1"/>
</dbReference>
<dbReference type="HAMAP" id="MF_01320_B">
    <property type="entry name" value="Ribosomal_uL2_B"/>
    <property type="match status" value="1"/>
</dbReference>
<dbReference type="InterPro" id="IPR012340">
    <property type="entry name" value="NA-bd_OB-fold"/>
</dbReference>
<dbReference type="InterPro" id="IPR014722">
    <property type="entry name" value="Rib_uL2_dom2"/>
</dbReference>
<dbReference type="InterPro" id="IPR002171">
    <property type="entry name" value="Ribosomal_uL2"/>
</dbReference>
<dbReference type="InterPro" id="IPR005880">
    <property type="entry name" value="Ribosomal_uL2_bac/org-type"/>
</dbReference>
<dbReference type="InterPro" id="IPR022669">
    <property type="entry name" value="Ribosomal_uL2_C"/>
</dbReference>
<dbReference type="InterPro" id="IPR022671">
    <property type="entry name" value="Ribosomal_uL2_CS"/>
</dbReference>
<dbReference type="InterPro" id="IPR014726">
    <property type="entry name" value="Ribosomal_uL2_dom3"/>
</dbReference>
<dbReference type="InterPro" id="IPR022666">
    <property type="entry name" value="Ribosomal_uL2_RNA-bd_dom"/>
</dbReference>
<dbReference type="InterPro" id="IPR008991">
    <property type="entry name" value="Translation_prot_SH3-like_sf"/>
</dbReference>
<dbReference type="NCBIfam" id="TIGR01171">
    <property type="entry name" value="rplB_bact"/>
    <property type="match status" value="1"/>
</dbReference>
<dbReference type="PANTHER" id="PTHR13691:SF5">
    <property type="entry name" value="LARGE RIBOSOMAL SUBUNIT PROTEIN UL2M"/>
    <property type="match status" value="1"/>
</dbReference>
<dbReference type="PANTHER" id="PTHR13691">
    <property type="entry name" value="RIBOSOMAL PROTEIN L2"/>
    <property type="match status" value="1"/>
</dbReference>
<dbReference type="Pfam" id="PF00181">
    <property type="entry name" value="Ribosomal_L2"/>
    <property type="match status" value="1"/>
</dbReference>
<dbReference type="Pfam" id="PF03947">
    <property type="entry name" value="Ribosomal_L2_C"/>
    <property type="match status" value="1"/>
</dbReference>
<dbReference type="PIRSF" id="PIRSF002158">
    <property type="entry name" value="Ribosomal_L2"/>
    <property type="match status" value="1"/>
</dbReference>
<dbReference type="SMART" id="SM01383">
    <property type="entry name" value="Ribosomal_L2"/>
    <property type="match status" value="1"/>
</dbReference>
<dbReference type="SMART" id="SM01382">
    <property type="entry name" value="Ribosomal_L2_C"/>
    <property type="match status" value="1"/>
</dbReference>
<dbReference type="SUPFAM" id="SSF50249">
    <property type="entry name" value="Nucleic acid-binding proteins"/>
    <property type="match status" value="1"/>
</dbReference>
<dbReference type="SUPFAM" id="SSF50104">
    <property type="entry name" value="Translation proteins SH3-like domain"/>
    <property type="match status" value="1"/>
</dbReference>
<dbReference type="PROSITE" id="PS00467">
    <property type="entry name" value="RIBOSOMAL_L2"/>
    <property type="match status" value="1"/>
</dbReference>
<accession>B6JNF4</accession>
<feature type="chain" id="PRO_1000141561" description="Large ribosomal subunit protein uL2">
    <location>
        <begin position="1"/>
        <end position="276"/>
    </location>
</feature>
<feature type="region of interest" description="Disordered" evidence="2">
    <location>
        <begin position="212"/>
        <end position="276"/>
    </location>
</feature>
<feature type="compositionally biased region" description="Basic residues" evidence="2">
    <location>
        <begin position="257"/>
        <end position="276"/>
    </location>
</feature>
<gene>
    <name evidence="1" type="primary">rplB</name>
    <name type="ordered locus">HPP12_1280</name>
</gene>
<keyword id="KW-0687">Ribonucleoprotein</keyword>
<keyword id="KW-0689">Ribosomal protein</keyword>
<keyword id="KW-0694">RNA-binding</keyword>
<keyword id="KW-0699">rRNA-binding</keyword>
<organism>
    <name type="scientific">Helicobacter pylori (strain P12)</name>
    <dbReference type="NCBI Taxonomy" id="570508"/>
    <lineage>
        <taxon>Bacteria</taxon>
        <taxon>Pseudomonadati</taxon>
        <taxon>Campylobacterota</taxon>
        <taxon>Epsilonproteobacteria</taxon>
        <taxon>Campylobacterales</taxon>
        <taxon>Helicobacteraceae</taxon>
        <taxon>Helicobacter</taxon>
    </lineage>
</organism>
<sequence>MAIKTYKPYTPSRRFMSVLDSKDITAKSSVKGLLTKLKATAGRNNNGRITSRHKERGAKKLYRIIDFKRNKYNIEGKVAAIEYDPYRNARIALVVYPDGDKRYILQPSGLKVGDSVIAAEGGLDIKVGFAMKLKNIPIGTVVHNIEMHPGAGGQLARSAGMSAQIMGRENKYTILRMPSSEMRYILSECMASVGVVGNEDFINVSIGKAGRNRHRGIRPQTRGSAMNPVDHPHGGGEGKTGTSGHPVSPWGTPAKGYKTRKKKASDKLIISRKKHK</sequence>
<reference key="1">
    <citation type="submission" date="2008-10" db="EMBL/GenBank/DDBJ databases">
        <title>The complete genome sequence of Helicobacter pylori strain P12.</title>
        <authorList>
            <person name="Fischer W."/>
            <person name="Windhager L."/>
            <person name="Karnholz A."/>
            <person name="Zeiller M."/>
            <person name="Zimmer R."/>
            <person name="Haas R."/>
        </authorList>
    </citation>
    <scope>NUCLEOTIDE SEQUENCE [LARGE SCALE GENOMIC DNA]</scope>
    <source>
        <strain>P12</strain>
    </source>
</reference>
<protein>
    <recommendedName>
        <fullName evidence="1">Large ribosomal subunit protein uL2</fullName>
    </recommendedName>
    <alternativeName>
        <fullName evidence="3">50S ribosomal protein L2</fullName>
    </alternativeName>
</protein>
<name>RL2_HELP2</name>